<keyword id="KW-0028">Amino-acid biosynthesis</keyword>
<keyword id="KW-0368">Histidine biosynthesis</keyword>
<keyword id="KW-0378">Hydrolase</keyword>
<keyword id="KW-0486">Methionine biosynthesis</keyword>
<keyword id="KW-0511">Multifunctional enzyme</keyword>
<keyword id="KW-0521">NADP</keyword>
<keyword id="KW-0554">One-carbon metabolism</keyword>
<keyword id="KW-0560">Oxidoreductase</keyword>
<keyword id="KW-0658">Purine biosynthesis</keyword>
<keyword id="KW-1185">Reference proteome</keyword>
<accession>Q8F523</accession>
<proteinExistence type="inferred from homology"/>
<dbReference type="EC" id="1.5.1.5" evidence="1"/>
<dbReference type="EC" id="3.5.4.9" evidence="1"/>
<dbReference type="EMBL" id="AE010300">
    <property type="protein sequence ID" value="AAN49064.1"/>
    <property type="molecule type" value="Genomic_DNA"/>
</dbReference>
<dbReference type="RefSeq" id="NP_712046.1">
    <property type="nucleotide sequence ID" value="NC_004342.2"/>
</dbReference>
<dbReference type="RefSeq" id="WP_001070308.1">
    <property type="nucleotide sequence ID" value="NC_004342.2"/>
</dbReference>
<dbReference type="SMR" id="Q8F523"/>
<dbReference type="FunCoup" id="Q8F523">
    <property type="interactions" value="447"/>
</dbReference>
<dbReference type="STRING" id="189518.LA_1865"/>
<dbReference type="PaxDb" id="189518-LA_1865"/>
<dbReference type="EnsemblBacteria" id="AAN49064">
    <property type="protein sequence ID" value="AAN49064"/>
    <property type="gene ID" value="LA_1865"/>
</dbReference>
<dbReference type="GeneID" id="61141917"/>
<dbReference type="KEGG" id="lil:LA_1865"/>
<dbReference type="PATRIC" id="fig|189518.3.peg.1856"/>
<dbReference type="HOGENOM" id="CLU_034045_2_1_12"/>
<dbReference type="InParanoid" id="Q8F523"/>
<dbReference type="OrthoDB" id="9803580at2"/>
<dbReference type="UniPathway" id="UPA00193"/>
<dbReference type="Proteomes" id="UP000001408">
    <property type="component" value="Chromosome I"/>
</dbReference>
<dbReference type="GO" id="GO:0005829">
    <property type="term" value="C:cytosol"/>
    <property type="evidence" value="ECO:0000318"/>
    <property type="project" value="GO_Central"/>
</dbReference>
<dbReference type="GO" id="GO:0004477">
    <property type="term" value="F:methenyltetrahydrofolate cyclohydrolase activity"/>
    <property type="evidence" value="ECO:0000318"/>
    <property type="project" value="GO_Central"/>
</dbReference>
<dbReference type="GO" id="GO:0004488">
    <property type="term" value="F:methylenetetrahydrofolate dehydrogenase (NADP+) activity"/>
    <property type="evidence" value="ECO:0000318"/>
    <property type="project" value="GO_Central"/>
</dbReference>
<dbReference type="GO" id="GO:0000105">
    <property type="term" value="P:L-histidine biosynthetic process"/>
    <property type="evidence" value="ECO:0007669"/>
    <property type="project" value="UniProtKB-KW"/>
</dbReference>
<dbReference type="GO" id="GO:0009086">
    <property type="term" value="P:methionine biosynthetic process"/>
    <property type="evidence" value="ECO:0007669"/>
    <property type="project" value="UniProtKB-KW"/>
</dbReference>
<dbReference type="GO" id="GO:0006164">
    <property type="term" value="P:purine nucleotide biosynthetic process"/>
    <property type="evidence" value="ECO:0007669"/>
    <property type="project" value="UniProtKB-KW"/>
</dbReference>
<dbReference type="GO" id="GO:0035999">
    <property type="term" value="P:tetrahydrofolate interconversion"/>
    <property type="evidence" value="ECO:0000318"/>
    <property type="project" value="GO_Central"/>
</dbReference>
<dbReference type="CDD" id="cd01080">
    <property type="entry name" value="NAD_bind_m-THF_DH_Cyclohyd"/>
    <property type="match status" value="1"/>
</dbReference>
<dbReference type="FunFam" id="3.40.50.720:FF:000094">
    <property type="entry name" value="Bifunctional protein FolD"/>
    <property type="match status" value="1"/>
</dbReference>
<dbReference type="FunFam" id="3.40.50.10860:FF:000005">
    <property type="entry name" value="C-1-tetrahydrofolate synthase, cytoplasmic, putative"/>
    <property type="match status" value="1"/>
</dbReference>
<dbReference type="Gene3D" id="3.40.50.10860">
    <property type="entry name" value="Leucine Dehydrogenase, chain A, domain 1"/>
    <property type="match status" value="1"/>
</dbReference>
<dbReference type="Gene3D" id="3.40.50.720">
    <property type="entry name" value="NAD(P)-binding Rossmann-like Domain"/>
    <property type="match status" value="1"/>
</dbReference>
<dbReference type="HAMAP" id="MF_01576">
    <property type="entry name" value="THF_DHG_CYH"/>
    <property type="match status" value="1"/>
</dbReference>
<dbReference type="InterPro" id="IPR046346">
    <property type="entry name" value="Aminoacid_DH-like_N_sf"/>
</dbReference>
<dbReference type="InterPro" id="IPR036291">
    <property type="entry name" value="NAD(P)-bd_dom_sf"/>
</dbReference>
<dbReference type="InterPro" id="IPR000672">
    <property type="entry name" value="THF_DH/CycHdrlase"/>
</dbReference>
<dbReference type="InterPro" id="IPR020630">
    <property type="entry name" value="THF_DH/CycHdrlase_cat_dom"/>
</dbReference>
<dbReference type="InterPro" id="IPR020867">
    <property type="entry name" value="THF_DH/CycHdrlase_CS"/>
</dbReference>
<dbReference type="InterPro" id="IPR020631">
    <property type="entry name" value="THF_DH/CycHdrlase_NAD-bd_dom"/>
</dbReference>
<dbReference type="NCBIfam" id="NF010774">
    <property type="entry name" value="PRK14177.1"/>
    <property type="match status" value="1"/>
</dbReference>
<dbReference type="PANTHER" id="PTHR48099:SF5">
    <property type="entry name" value="C-1-TETRAHYDROFOLATE SYNTHASE, CYTOPLASMIC"/>
    <property type="match status" value="1"/>
</dbReference>
<dbReference type="PANTHER" id="PTHR48099">
    <property type="entry name" value="C-1-TETRAHYDROFOLATE SYNTHASE, CYTOPLASMIC-RELATED"/>
    <property type="match status" value="1"/>
</dbReference>
<dbReference type="Pfam" id="PF00763">
    <property type="entry name" value="THF_DHG_CYH"/>
    <property type="match status" value="1"/>
</dbReference>
<dbReference type="Pfam" id="PF02882">
    <property type="entry name" value="THF_DHG_CYH_C"/>
    <property type="match status" value="1"/>
</dbReference>
<dbReference type="PRINTS" id="PR00085">
    <property type="entry name" value="THFDHDRGNASE"/>
</dbReference>
<dbReference type="SUPFAM" id="SSF53223">
    <property type="entry name" value="Aminoacid dehydrogenase-like, N-terminal domain"/>
    <property type="match status" value="1"/>
</dbReference>
<dbReference type="SUPFAM" id="SSF51735">
    <property type="entry name" value="NAD(P)-binding Rossmann-fold domains"/>
    <property type="match status" value="1"/>
</dbReference>
<dbReference type="PROSITE" id="PS00767">
    <property type="entry name" value="THF_DHG_CYH_2"/>
    <property type="match status" value="1"/>
</dbReference>
<organism>
    <name type="scientific">Leptospira interrogans serogroup Icterohaemorrhagiae serovar Lai (strain 56601)</name>
    <dbReference type="NCBI Taxonomy" id="189518"/>
    <lineage>
        <taxon>Bacteria</taxon>
        <taxon>Pseudomonadati</taxon>
        <taxon>Spirochaetota</taxon>
        <taxon>Spirochaetia</taxon>
        <taxon>Leptospirales</taxon>
        <taxon>Leptospiraceae</taxon>
        <taxon>Leptospira</taxon>
    </lineage>
</organism>
<reference key="1">
    <citation type="journal article" date="2003" name="Nature">
        <title>Unique physiological and pathogenic features of Leptospira interrogans revealed by whole-genome sequencing.</title>
        <authorList>
            <person name="Ren S.-X."/>
            <person name="Fu G."/>
            <person name="Jiang X.-G."/>
            <person name="Zeng R."/>
            <person name="Miao Y.-G."/>
            <person name="Xu H."/>
            <person name="Zhang Y.-X."/>
            <person name="Xiong H."/>
            <person name="Lu G."/>
            <person name="Lu L.-F."/>
            <person name="Jiang H.-Q."/>
            <person name="Jia J."/>
            <person name="Tu Y.-F."/>
            <person name="Jiang J.-X."/>
            <person name="Gu W.-Y."/>
            <person name="Zhang Y.-Q."/>
            <person name="Cai Z."/>
            <person name="Sheng H.-H."/>
            <person name="Yin H.-F."/>
            <person name="Zhang Y."/>
            <person name="Zhu G.-F."/>
            <person name="Wan M."/>
            <person name="Huang H.-L."/>
            <person name="Qian Z."/>
            <person name="Wang S.-Y."/>
            <person name="Ma W."/>
            <person name="Yao Z.-J."/>
            <person name="Shen Y."/>
            <person name="Qiang B.-Q."/>
            <person name="Xia Q.-C."/>
            <person name="Guo X.-K."/>
            <person name="Danchin A."/>
            <person name="Saint Girons I."/>
            <person name="Somerville R.L."/>
            <person name="Wen Y.-M."/>
            <person name="Shi M.-H."/>
            <person name="Chen Z."/>
            <person name="Xu J.-G."/>
            <person name="Zhao G.-P."/>
        </authorList>
    </citation>
    <scope>NUCLEOTIDE SEQUENCE [LARGE SCALE GENOMIC DNA]</scope>
    <source>
        <strain>56601</strain>
    </source>
</reference>
<feature type="chain" id="PRO_0000268386" description="Bifunctional protein FolD">
    <location>
        <begin position="1"/>
        <end position="284"/>
    </location>
</feature>
<feature type="binding site" evidence="1">
    <location>
        <begin position="166"/>
        <end position="168"/>
    </location>
    <ligand>
        <name>NADP(+)</name>
        <dbReference type="ChEBI" id="CHEBI:58349"/>
    </ligand>
</feature>
<feature type="binding site" evidence="1">
    <location>
        <position position="191"/>
    </location>
    <ligand>
        <name>NADP(+)</name>
        <dbReference type="ChEBI" id="CHEBI:58349"/>
    </ligand>
</feature>
<evidence type="ECO:0000255" key="1">
    <source>
        <dbReference type="HAMAP-Rule" id="MF_01576"/>
    </source>
</evidence>
<protein>
    <recommendedName>
        <fullName evidence="1">Bifunctional protein FolD</fullName>
    </recommendedName>
    <domain>
        <recommendedName>
            <fullName evidence="1">Methylenetetrahydrofolate dehydrogenase</fullName>
            <ecNumber evidence="1">1.5.1.5</ecNumber>
        </recommendedName>
    </domain>
    <domain>
        <recommendedName>
            <fullName evidence="1">Methenyltetrahydrofolate cyclohydrolase</fullName>
            <ecNumber evidence="1">3.5.4.9</ecNumber>
        </recommendedName>
    </domain>
</protein>
<comment type="function">
    <text evidence="1">Catalyzes the oxidation of 5,10-methylenetetrahydrofolate to 5,10-methenyltetrahydrofolate and then the hydrolysis of 5,10-methenyltetrahydrofolate to 10-formyltetrahydrofolate.</text>
</comment>
<comment type="catalytic activity">
    <reaction evidence="1">
        <text>(6R)-5,10-methylene-5,6,7,8-tetrahydrofolate + NADP(+) = (6R)-5,10-methenyltetrahydrofolate + NADPH</text>
        <dbReference type="Rhea" id="RHEA:22812"/>
        <dbReference type="ChEBI" id="CHEBI:15636"/>
        <dbReference type="ChEBI" id="CHEBI:57455"/>
        <dbReference type="ChEBI" id="CHEBI:57783"/>
        <dbReference type="ChEBI" id="CHEBI:58349"/>
        <dbReference type="EC" id="1.5.1.5"/>
    </reaction>
</comment>
<comment type="catalytic activity">
    <reaction evidence="1">
        <text>(6R)-5,10-methenyltetrahydrofolate + H2O = (6R)-10-formyltetrahydrofolate + H(+)</text>
        <dbReference type="Rhea" id="RHEA:23700"/>
        <dbReference type="ChEBI" id="CHEBI:15377"/>
        <dbReference type="ChEBI" id="CHEBI:15378"/>
        <dbReference type="ChEBI" id="CHEBI:57455"/>
        <dbReference type="ChEBI" id="CHEBI:195366"/>
        <dbReference type="EC" id="3.5.4.9"/>
    </reaction>
</comment>
<comment type="pathway">
    <text evidence="1">One-carbon metabolism; tetrahydrofolate interconversion.</text>
</comment>
<comment type="subunit">
    <text evidence="1">Homodimer.</text>
</comment>
<comment type="similarity">
    <text evidence="1">Belongs to the tetrahydrofolate dehydrogenase/cyclohydrolase family.</text>
</comment>
<name>FOLD_LEPIN</name>
<sequence>MNPVLLDGKKLSEKIKEEIRSAIEERKTKNFRIPKLATILVGNNPASETYVSMKVKACHSVGMGSEMIRLREQTTTKELLDVIDKLNSDPNVDGILLQHPTPSGIDERAAFDRIALHKDVDGVTTLSFGKLSMGVETYLPCTPYGMVLLLKEYGIDVAGKNAVVVGRSPILGKPMAMLLTEMNATVTLCHSKTQNLPDIVRNADIIIGAVGKPEFIKADWISNGAILLDAGYNPGNIGDIEISKAKDRSSFYTPVPGGVGPMTIAVLLLQTLYSAKEHFTPPVK</sequence>
<gene>
    <name evidence="1" type="primary">folD</name>
    <name type="ordered locus">LA_1865</name>
</gene>